<accession>P0DOA1</accession>
<gene>
    <name evidence="6" type="primary">mfa1</name>
    <name evidence="7" type="synonym">53K</name>
</gene>
<evidence type="ECO:0000250" key="1">
    <source>
        <dbReference type="UniProtKB" id="B2RHG1"/>
    </source>
</evidence>
<evidence type="ECO:0000255" key="2">
    <source>
        <dbReference type="PROSITE-ProRule" id="PRU00303"/>
    </source>
</evidence>
<evidence type="ECO:0000256" key="3">
    <source>
        <dbReference type="SAM" id="MobiDB-lite"/>
    </source>
</evidence>
<evidence type="ECO:0000269" key="4">
    <source>
    </source>
</evidence>
<evidence type="ECO:0000303" key="5">
    <source>
    </source>
</evidence>
<evidence type="ECO:0000305" key="6"/>
<evidence type="ECO:0000312" key="7">
    <source>
        <dbReference type="EMBL" id="BAR91678.1"/>
    </source>
</evidence>
<sequence>MKLNKMFLVGALLSLGFASCSKEGNGPAPDSSSTADTHMSVSMSLPQHNRAGDNDYNPIGEYGGVDKINDLTVYVVGDGKIDVRKLSTADLQVNQGASTTSIVTAPFQVKSGEKTVYAIVNITPKVEAALNAATNAADLKVAYEAAYAAFSDAGSEIATLVNNQDQMIMSGKPVVQTILPNVSAANASVQNKVPIIVKRAAIRASMTITQQPVNGAYEIKALRPGNVEVVIATVSDLKWSVAQYEKKYYLQQKDNALSPAASFVPASTNDYNGANGAMKHYDYSQLANRITVHQLNAPYSVTDVPNVAYKYVSETTHADNDYRKGNTTYILVKGKLKPVAAMWADGEQAAYQEGGDLFLGLVTGKFYANEANANAANPASGGAGNPRVVTYKAAAVYYYAWLNPNTLDPTTWTMSPARRNNIYNVNISKFRNIGLSGNPFVPTDPDPNNPDTPDNPDTPDPEDPDTPNPEEPLPVQKTYMVVDVTVTPWTLHNYDIEF</sequence>
<reference evidence="7" key="1">
    <citation type="submission" date="2014-12" db="EMBL/GenBank/DDBJ databases">
        <title>Another fimbrilin of Mfa1 fimbriae in Porphyromonas gingivalis.</title>
        <authorList>
            <person name="Nagano K."/>
            <person name="Hasegawa Y."/>
            <person name="Yoshida Y."/>
            <person name="Yoshimura F."/>
        </authorList>
    </citation>
    <scope>NUCLEOTIDE SEQUENCE [GENOMIC DNA]</scope>
    <source>
        <strain evidence="7">Ando</strain>
    </source>
</reference>
<reference key="2">
    <citation type="journal article" date="2015" name="J. Dent. Res.">
        <title>A major fimbrilin variant of Mfa1 fimbriae in Porphyromonas gingivalis.</title>
        <authorList>
            <person name="Nagano K."/>
            <person name="Hasegawa Y."/>
            <person name="Yoshida Y."/>
            <person name="Yoshimura F."/>
        </authorList>
    </citation>
    <scope>FUNCTION</scope>
    <scope>SUBUNIT</scope>
    <scope>SUBCELLULAR LOCATION</scope>
    <source>
        <strain evidence="5">Ando</strain>
    </source>
</reference>
<feature type="signal peptide" evidence="2">
    <location>
        <begin position="1"/>
        <end position="19"/>
    </location>
</feature>
<feature type="propeptide" id="PRO_0000436792" evidence="1">
    <location>
        <begin position="20"/>
        <end position="50"/>
    </location>
</feature>
<feature type="chain" id="PRO_5005907438" description="Minor fimbrium subunit Mfa1">
    <location>
        <begin position="51"/>
        <end position="498"/>
    </location>
</feature>
<feature type="region of interest" description="Disordered" evidence="3">
    <location>
        <begin position="436"/>
        <end position="476"/>
    </location>
</feature>
<feature type="site" description="Cleavage; by gingipain" evidence="1">
    <location>
        <begin position="50"/>
        <end position="51"/>
    </location>
</feature>
<feature type="lipid moiety-binding region" description="N-palmitoyl cysteine" evidence="2">
    <location>
        <position position="20"/>
    </location>
</feature>
<feature type="lipid moiety-binding region" description="S-diacylglycerol cysteine" evidence="2">
    <location>
        <position position="20"/>
    </location>
</feature>
<organism>
    <name type="scientific">Porphyromonas gingivalis</name>
    <name type="common">Bacteroides gingivalis</name>
    <dbReference type="NCBI Taxonomy" id="837"/>
    <lineage>
        <taxon>Bacteria</taxon>
        <taxon>Pseudomonadati</taxon>
        <taxon>Bacteroidota</taxon>
        <taxon>Bacteroidia</taxon>
        <taxon>Bacteroidales</taxon>
        <taxon>Porphyromonadaceae</taxon>
        <taxon>Porphyromonas</taxon>
    </lineage>
</organism>
<proteinExistence type="evidence at protein level"/>
<protein>
    <recommendedName>
        <fullName evidence="6">Minor fimbrium subunit Mfa1</fullName>
    </recommendedName>
    <alternativeName>
        <fullName>53 kDa fimbrilin</fullName>
    </alternativeName>
</protein>
<dbReference type="EMBL" id="AB999995">
    <property type="protein sequence ID" value="BAR91678.1"/>
    <property type="molecule type" value="Genomic_DNA"/>
</dbReference>
<dbReference type="RefSeq" id="WP_179203985.1">
    <property type="nucleotide sequence ID" value="NZ_BCBV01000058.1"/>
</dbReference>
<dbReference type="SMR" id="P0DOA1"/>
<dbReference type="GO" id="GO:0009279">
    <property type="term" value="C:cell outer membrane"/>
    <property type="evidence" value="ECO:0007669"/>
    <property type="project" value="UniProtKB-SubCell"/>
</dbReference>
<dbReference type="GO" id="GO:0019867">
    <property type="term" value="C:outer membrane"/>
    <property type="evidence" value="ECO:0000250"/>
    <property type="project" value="UniProtKB"/>
</dbReference>
<dbReference type="GO" id="GO:0009418">
    <property type="term" value="C:pilus shaft"/>
    <property type="evidence" value="ECO:0000250"/>
    <property type="project" value="UniProtKB"/>
</dbReference>
<dbReference type="GO" id="GO:0098609">
    <property type="term" value="P:cell-cell adhesion"/>
    <property type="evidence" value="ECO:0000250"/>
    <property type="project" value="UniProtKB"/>
</dbReference>
<dbReference type="Gene3D" id="2.60.40.2580">
    <property type="match status" value="1"/>
</dbReference>
<dbReference type="Gene3D" id="2.60.40.3690">
    <property type="match status" value="1"/>
</dbReference>
<dbReference type="InterPro" id="IPR029140">
    <property type="entry name" value="Mfa1_C"/>
</dbReference>
<dbReference type="InterPro" id="IPR047786">
    <property type="entry name" value="Mfa1_fim"/>
</dbReference>
<dbReference type="NCBIfam" id="NF038041">
    <property type="entry name" value="fim_Mfa1_fam"/>
    <property type="match status" value="1"/>
</dbReference>
<dbReference type="Pfam" id="PF15495">
    <property type="entry name" value="Fimbrillin_C"/>
    <property type="match status" value="1"/>
</dbReference>
<dbReference type="PROSITE" id="PS51257">
    <property type="entry name" value="PROKAR_LIPOPROTEIN"/>
    <property type="match status" value="1"/>
</dbReference>
<name>MFA1_PORGN</name>
<comment type="function">
    <text evidence="4 6">Structural subunit of the minor fimbriae (PubMed:26001707). These filamentous pili are attached to the cell surface; they mediate biofilm formation, adhesion onto host cells and onto other bacteria that are part of the oral microbiome. They play an important role in invasion of periodontal tissues and are recognized as major virulence factors. Mfa1 orthologs from different strains have highly divergent sequences, and this correlates with pathogenicity (Probable).</text>
</comment>
<comment type="subunit">
    <text evidence="4 6">Structural component of the fimbrial stalk. Minor fimbriae are composed of a structural subunit, such as the 53 kDa fimbrillin, and the accessory subunits Mfa3, Mfa4 and Mfa5 (PubMed:26001707). Fimbrium assembly occurs by linear, head-to-tail oligomerization of fimbrial subunits. This is mediated via insertion of a C-terminal beta-strand from one subunit into a groove in the N-terminal domain of the following subunit (Probable).</text>
</comment>
<comment type="subcellular location">
    <subcellularLocation>
        <location evidence="4">Fimbrium</location>
    </subcellularLocation>
    <subcellularLocation>
        <location evidence="6">Cell outer membrane</location>
    </subcellularLocation>
    <text evidence="6">Probably synthesized as a palmitoylated precursor. Efficient export to the outer membrane and integration into fimbriae requires lipidation and subsequent proteolytic removal of the lipidated propeptide (Probable).</text>
</comment>
<comment type="similarity">
    <text evidence="6">Belongs to the bacteroidetes fimbrillin superfamily. FimA/Mfa1 family.</text>
</comment>
<keyword id="KW-0998">Cell outer membrane</keyword>
<keyword id="KW-0281">Fimbrium</keyword>
<keyword id="KW-0449">Lipoprotein</keyword>
<keyword id="KW-0472">Membrane</keyword>
<keyword id="KW-0564">Palmitate</keyword>
<keyword id="KW-0732">Signal</keyword>
<keyword id="KW-0843">Virulence</keyword>